<accession>O68936</accession>
<keyword id="KW-0687">Ribonucleoprotein</keyword>
<keyword id="KW-0689">Ribosomal protein</keyword>
<reference key="1">
    <citation type="journal article" date="1999" name="J. Bacteriol.">
        <title>Phylogenetic analysis of L4-mediated autogenous control of the S10 ribosomal protein operon.</title>
        <authorList>
            <person name="Allen T."/>
            <person name="Shen P."/>
            <person name="Samsel L."/>
            <person name="Liu R."/>
            <person name="Lindahl L."/>
            <person name="Zengel J.M."/>
        </authorList>
    </citation>
    <scope>NUCLEOTIDE SEQUENCE [GENOMIC DNA]</scope>
</reference>
<name>RS10_SERMA</name>
<organism>
    <name type="scientific">Serratia marcescens</name>
    <dbReference type="NCBI Taxonomy" id="615"/>
    <lineage>
        <taxon>Bacteria</taxon>
        <taxon>Pseudomonadati</taxon>
        <taxon>Pseudomonadota</taxon>
        <taxon>Gammaproteobacteria</taxon>
        <taxon>Enterobacterales</taxon>
        <taxon>Yersiniaceae</taxon>
        <taxon>Serratia</taxon>
    </lineage>
</organism>
<feature type="chain" id="PRO_0000146590" description="Small ribosomal subunit protein uS10">
    <location>
        <begin position="1"/>
        <end position="9" status="greater than"/>
    </location>
</feature>
<feature type="non-terminal residue">
    <location>
        <position position="9"/>
    </location>
</feature>
<dbReference type="EMBL" id="AF058451">
    <property type="protein sequence ID" value="AAC14294.1"/>
    <property type="molecule type" value="Genomic_DNA"/>
</dbReference>
<dbReference type="GO" id="GO:1990904">
    <property type="term" value="C:ribonucleoprotein complex"/>
    <property type="evidence" value="ECO:0007669"/>
    <property type="project" value="UniProtKB-KW"/>
</dbReference>
<dbReference type="GO" id="GO:0005840">
    <property type="term" value="C:ribosome"/>
    <property type="evidence" value="ECO:0007669"/>
    <property type="project" value="UniProtKB-KW"/>
</dbReference>
<evidence type="ECO:0000250" key="1"/>
<evidence type="ECO:0000305" key="2"/>
<proteinExistence type="inferred from homology"/>
<gene>
    <name type="primary">rpsJ</name>
</gene>
<sequence length="9" mass="1214">MQNQRIRIR</sequence>
<comment type="function">
    <text evidence="1">Involved in the binding of tRNA to the ribosomes.</text>
</comment>
<comment type="subunit">
    <text evidence="1">Part of the 30S ribosomal subunit.</text>
</comment>
<comment type="similarity">
    <text evidence="2">Belongs to the universal ribosomal protein uS10 family.</text>
</comment>
<protein>
    <recommendedName>
        <fullName evidence="2">Small ribosomal subunit protein uS10</fullName>
    </recommendedName>
    <alternativeName>
        <fullName>30S ribosomal protein S10</fullName>
    </alternativeName>
</protein>